<protein>
    <recommendedName>
        <fullName>BEN domain-containing protein 5</fullName>
    </recommendedName>
</protein>
<accession>Q8C6D4</accession>
<accession>Q3TJI2</accession>
<accession>Q80V74</accession>
<accession>Q80WB6</accession>
<accession>Q9CRW0</accession>
<name>BEND5_MOUSE</name>
<proteinExistence type="evidence at transcript level"/>
<sequence>MYAFVRFLEDNVCYALPVSCVRDFSPRSRLDFDNQKVYAVYRGPEELGAEPESPPRAPRDWGALLLHKAQILALAEDKSDLENSVMQKKIKIPKLSLSHVEDDGEVKDYGEEDLQLRHIKRPEGRKPSEAAHKSIEAVVARLERQNGLSLGHSTCPEEVFVEASPGTEDMDSLEDAVVPRALYEELLRNYQQQQEEMRHLQQELERTRRQLVQQAKKLKEYGALVSEMKELRDLNRRLQDVLLLRLGSGPAIDLEKVKSECLEPEPELRSTFSEEANTSSYYPAPAPVMDKYILDNGKVHLGSGIWVDEEKWHQLQVTQGDSKYTKNLAVMIWGTDVLKNRSVTGVATKKKKDAIPKPPLSPHKLSIVRECLYDRIAQETVDETEIAQRLSKVNKYICEKIMDINKSCKNEERREAKYNLQ</sequence>
<gene>
    <name type="primary">Bend5</name>
</gene>
<evidence type="ECO:0000250" key="1">
    <source>
        <dbReference type="UniProtKB" id="Q7L4P6"/>
    </source>
</evidence>
<evidence type="ECO:0000255" key="2"/>
<evidence type="ECO:0000255" key="3">
    <source>
        <dbReference type="PROSITE-ProRule" id="PRU00784"/>
    </source>
</evidence>
<evidence type="ECO:0000303" key="4">
    <source>
    </source>
</evidence>
<feature type="chain" id="PRO_0000274280" description="BEN domain-containing protein 5">
    <location>
        <begin position="1"/>
        <end position="421"/>
    </location>
</feature>
<feature type="domain" description="BEN" evidence="3">
    <location>
        <begin position="302"/>
        <end position="408"/>
    </location>
</feature>
<feature type="coiled-coil region" evidence="2">
    <location>
        <begin position="180"/>
        <end position="243"/>
    </location>
</feature>
<feature type="modified residue" description="N6-acetyllysine" evidence="1">
    <location>
        <position position="133"/>
    </location>
</feature>
<feature type="cross-link" description="Glycyl lysine isopeptide (Lys-Gly) (interchain with G-Cter in SUMO2)" evidence="1">
    <location>
        <position position="258"/>
    </location>
</feature>
<feature type="splice variant" id="VSP_022696" description="In isoform 2." evidence="4">
    <location>
        <begin position="1"/>
        <end position="169"/>
    </location>
</feature>
<reference key="1">
    <citation type="journal article" date="2005" name="Science">
        <title>The transcriptional landscape of the mammalian genome.</title>
        <authorList>
            <person name="Carninci P."/>
            <person name="Kasukawa T."/>
            <person name="Katayama S."/>
            <person name="Gough J."/>
            <person name="Frith M.C."/>
            <person name="Maeda N."/>
            <person name="Oyama R."/>
            <person name="Ravasi T."/>
            <person name="Lenhard B."/>
            <person name="Wells C."/>
            <person name="Kodzius R."/>
            <person name="Shimokawa K."/>
            <person name="Bajic V.B."/>
            <person name="Brenner S.E."/>
            <person name="Batalov S."/>
            <person name="Forrest A.R."/>
            <person name="Zavolan M."/>
            <person name="Davis M.J."/>
            <person name="Wilming L.G."/>
            <person name="Aidinis V."/>
            <person name="Allen J.E."/>
            <person name="Ambesi-Impiombato A."/>
            <person name="Apweiler R."/>
            <person name="Aturaliya R.N."/>
            <person name="Bailey T.L."/>
            <person name="Bansal M."/>
            <person name="Baxter L."/>
            <person name="Beisel K.W."/>
            <person name="Bersano T."/>
            <person name="Bono H."/>
            <person name="Chalk A.M."/>
            <person name="Chiu K.P."/>
            <person name="Choudhary V."/>
            <person name="Christoffels A."/>
            <person name="Clutterbuck D.R."/>
            <person name="Crowe M.L."/>
            <person name="Dalla E."/>
            <person name="Dalrymple B.P."/>
            <person name="de Bono B."/>
            <person name="Della Gatta G."/>
            <person name="di Bernardo D."/>
            <person name="Down T."/>
            <person name="Engstrom P."/>
            <person name="Fagiolini M."/>
            <person name="Faulkner G."/>
            <person name="Fletcher C.F."/>
            <person name="Fukushima T."/>
            <person name="Furuno M."/>
            <person name="Futaki S."/>
            <person name="Gariboldi M."/>
            <person name="Georgii-Hemming P."/>
            <person name="Gingeras T.R."/>
            <person name="Gojobori T."/>
            <person name="Green R.E."/>
            <person name="Gustincich S."/>
            <person name="Harbers M."/>
            <person name="Hayashi Y."/>
            <person name="Hensch T.K."/>
            <person name="Hirokawa N."/>
            <person name="Hill D."/>
            <person name="Huminiecki L."/>
            <person name="Iacono M."/>
            <person name="Ikeo K."/>
            <person name="Iwama A."/>
            <person name="Ishikawa T."/>
            <person name="Jakt M."/>
            <person name="Kanapin A."/>
            <person name="Katoh M."/>
            <person name="Kawasawa Y."/>
            <person name="Kelso J."/>
            <person name="Kitamura H."/>
            <person name="Kitano H."/>
            <person name="Kollias G."/>
            <person name="Krishnan S.P."/>
            <person name="Kruger A."/>
            <person name="Kummerfeld S.K."/>
            <person name="Kurochkin I.V."/>
            <person name="Lareau L.F."/>
            <person name="Lazarevic D."/>
            <person name="Lipovich L."/>
            <person name="Liu J."/>
            <person name="Liuni S."/>
            <person name="McWilliam S."/>
            <person name="Madan Babu M."/>
            <person name="Madera M."/>
            <person name="Marchionni L."/>
            <person name="Matsuda H."/>
            <person name="Matsuzawa S."/>
            <person name="Miki H."/>
            <person name="Mignone F."/>
            <person name="Miyake S."/>
            <person name="Morris K."/>
            <person name="Mottagui-Tabar S."/>
            <person name="Mulder N."/>
            <person name="Nakano N."/>
            <person name="Nakauchi H."/>
            <person name="Ng P."/>
            <person name="Nilsson R."/>
            <person name="Nishiguchi S."/>
            <person name="Nishikawa S."/>
            <person name="Nori F."/>
            <person name="Ohara O."/>
            <person name="Okazaki Y."/>
            <person name="Orlando V."/>
            <person name="Pang K.C."/>
            <person name="Pavan W.J."/>
            <person name="Pavesi G."/>
            <person name="Pesole G."/>
            <person name="Petrovsky N."/>
            <person name="Piazza S."/>
            <person name="Reed J."/>
            <person name="Reid J.F."/>
            <person name="Ring B.Z."/>
            <person name="Ringwald M."/>
            <person name="Rost B."/>
            <person name="Ruan Y."/>
            <person name="Salzberg S.L."/>
            <person name="Sandelin A."/>
            <person name="Schneider C."/>
            <person name="Schoenbach C."/>
            <person name="Sekiguchi K."/>
            <person name="Semple C.A."/>
            <person name="Seno S."/>
            <person name="Sessa L."/>
            <person name="Sheng Y."/>
            <person name="Shibata Y."/>
            <person name="Shimada H."/>
            <person name="Shimada K."/>
            <person name="Silva D."/>
            <person name="Sinclair B."/>
            <person name="Sperling S."/>
            <person name="Stupka E."/>
            <person name="Sugiura K."/>
            <person name="Sultana R."/>
            <person name="Takenaka Y."/>
            <person name="Taki K."/>
            <person name="Tammoja K."/>
            <person name="Tan S.L."/>
            <person name="Tang S."/>
            <person name="Taylor M.S."/>
            <person name="Tegner J."/>
            <person name="Teichmann S.A."/>
            <person name="Ueda H.R."/>
            <person name="van Nimwegen E."/>
            <person name="Verardo R."/>
            <person name="Wei C.L."/>
            <person name="Yagi K."/>
            <person name="Yamanishi H."/>
            <person name="Zabarovsky E."/>
            <person name="Zhu S."/>
            <person name="Zimmer A."/>
            <person name="Hide W."/>
            <person name="Bult C."/>
            <person name="Grimmond S.M."/>
            <person name="Teasdale R.D."/>
            <person name="Liu E.T."/>
            <person name="Brusic V."/>
            <person name="Quackenbush J."/>
            <person name="Wahlestedt C."/>
            <person name="Mattick J.S."/>
            <person name="Hume D.A."/>
            <person name="Kai C."/>
            <person name="Sasaki D."/>
            <person name="Tomaru Y."/>
            <person name="Fukuda S."/>
            <person name="Kanamori-Katayama M."/>
            <person name="Suzuki M."/>
            <person name="Aoki J."/>
            <person name="Arakawa T."/>
            <person name="Iida J."/>
            <person name="Imamura K."/>
            <person name="Itoh M."/>
            <person name="Kato T."/>
            <person name="Kawaji H."/>
            <person name="Kawagashira N."/>
            <person name="Kawashima T."/>
            <person name="Kojima M."/>
            <person name="Kondo S."/>
            <person name="Konno H."/>
            <person name="Nakano K."/>
            <person name="Ninomiya N."/>
            <person name="Nishio T."/>
            <person name="Okada M."/>
            <person name="Plessy C."/>
            <person name="Shibata K."/>
            <person name="Shiraki T."/>
            <person name="Suzuki S."/>
            <person name="Tagami M."/>
            <person name="Waki K."/>
            <person name="Watahiki A."/>
            <person name="Okamura-Oho Y."/>
            <person name="Suzuki H."/>
            <person name="Kawai J."/>
            <person name="Hayashizaki Y."/>
        </authorList>
    </citation>
    <scope>NUCLEOTIDE SEQUENCE [LARGE SCALE MRNA] (ISOFORMS 1 AND 2)</scope>
    <source>
        <strain>C57BL/6J</strain>
        <tissue>Head</tissue>
        <tissue>Placenta</tissue>
        <tissue>Tongue</tissue>
    </source>
</reference>
<reference key="2">
    <citation type="journal article" date="2004" name="Genome Res.">
        <title>The status, quality, and expansion of the NIH full-length cDNA project: the Mammalian Gene Collection (MGC).</title>
        <authorList>
            <consortium name="The MGC Project Team"/>
        </authorList>
    </citation>
    <scope>NUCLEOTIDE SEQUENCE [LARGE SCALE MRNA] OF 8-421 (ISOFORM 1)</scope>
    <source>
        <strain>FVB/N</strain>
        <tissue>Mammary gland</tissue>
    </source>
</reference>
<comment type="function">
    <text evidence="1">Acts as a transcriptional repressor.</text>
</comment>
<comment type="alternative products">
    <event type="alternative splicing"/>
    <isoform>
        <id>Q8C6D4-1</id>
        <name>1</name>
        <sequence type="displayed"/>
    </isoform>
    <isoform>
        <id>Q8C6D4-2</id>
        <name>2</name>
        <sequence type="described" ref="VSP_022696"/>
    </isoform>
</comment>
<comment type="domain">
    <text evidence="1">The BEN domain mediates DNA-binding.</text>
</comment>
<dbReference type="EMBL" id="AK014057">
    <property type="protein sequence ID" value="BAB29136.1"/>
    <property type="molecule type" value="mRNA"/>
</dbReference>
<dbReference type="EMBL" id="AK075885">
    <property type="protein sequence ID" value="BAC36030.1"/>
    <property type="molecule type" value="mRNA"/>
</dbReference>
<dbReference type="EMBL" id="AK156708">
    <property type="protein sequence ID" value="BAE33814.1"/>
    <property type="molecule type" value="mRNA"/>
</dbReference>
<dbReference type="EMBL" id="AK167425">
    <property type="protein sequence ID" value="BAE39513.1"/>
    <property type="molecule type" value="mRNA"/>
</dbReference>
<dbReference type="EMBL" id="BC037633">
    <property type="protein sequence ID" value="AAH37633.1"/>
    <property type="molecule type" value="mRNA"/>
</dbReference>
<dbReference type="EMBL" id="BC051512">
    <property type="protein sequence ID" value="AAH51512.1"/>
    <property type="molecule type" value="mRNA"/>
</dbReference>
<dbReference type="CCDS" id="CCDS18472.1">
    <molecule id="Q8C6D4-1"/>
</dbReference>
<dbReference type="RefSeq" id="NP_080555.1">
    <molecule id="Q8C6D4-1"/>
    <property type="nucleotide sequence ID" value="NM_026279.3"/>
</dbReference>
<dbReference type="RefSeq" id="XP_011238896.1">
    <molecule id="Q8C6D4-2"/>
    <property type="nucleotide sequence ID" value="XM_011240594.4"/>
</dbReference>
<dbReference type="RefSeq" id="XP_017175855.1">
    <molecule id="Q8C6D4-2"/>
    <property type="nucleotide sequence ID" value="XM_017320366.3"/>
</dbReference>
<dbReference type="SMR" id="Q8C6D4"/>
<dbReference type="FunCoup" id="Q8C6D4">
    <property type="interactions" value="382"/>
</dbReference>
<dbReference type="STRING" id="10090.ENSMUSP00000030274"/>
<dbReference type="iPTMnet" id="Q8C6D4"/>
<dbReference type="PhosphoSitePlus" id="Q8C6D4"/>
<dbReference type="PaxDb" id="10090-ENSMUSP00000030274"/>
<dbReference type="ProteomicsDB" id="273481">
    <molecule id="Q8C6D4-1"/>
</dbReference>
<dbReference type="ProteomicsDB" id="273482">
    <molecule id="Q8C6D4-2"/>
</dbReference>
<dbReference type="Antibodypedia" id="53655">
    <property type="antibodies" value="62 antibodies from 23 providers"/>
</dbReference>
<dbReference type="DNASU" id="67621"/>
<dbReference type="Ensembl" id="ENSMUST00000030274.7">
    <molecule id="Q8C6D4-1"/>
    <property type="protein sequence ID" value="ENSMUSP00000030274.7"/>
    <property type="gene ID" value="ENSMUSG00000028545.14"/>
</dbReference>
<dbReference type="GeneID" id="67621"/>
<dbReference type="KEGG" id="mmu:67621"/>
<dbReference type="UCSC" id="uc008ude.2">
    <molecule id="Q8C6D4-1"/>
    <property type="organism name" value="mouse"/>
</dbReference>
<dbReference type="AGR" id="MGI:1914871"/>
<dbReference type="CTD" id="79656"/>
<dbReference type="MGI" id="MGI:1914871">
    <property type="gene designation" value="Bend5"/>
</dbReference>
<dbReference type="VEuPathDB" id="HostDB:ENSMUSG00000028545"/>
<dbReference type="eggNOG" id="ENOG502QTVS">
    <property type="taxonomic scope" value="Eukaryota"/>
</dbReference>
<dbReference type="GeneTree" id="ENSGT00390000001724"/>
<dbReference type="HOGENOM" id="CLU_739568_0_0_1"/>
<dbReference type="InParanoid" id="Q8C6D4"/>
<dbReference type="OMA" id="HQKVYLV"/>
<dbReference type="OrthoDB" id="9931198at2759"/>
<dbReference type="PhylomeDB" id="Q8C6D4"/>
<dbReference type="TreeFam" id="TF331898"/>
<dbReference type="BioGRID-ORCS" id="67621">
    <property type="hits" value="1 hit in 74 CRISPR screens"/>
</dbReference>
<dbReference type="PRO" id="PR:Q8C6D4"/>
<dbReference type="Proteomes" id="UP000000589">
    <property type="component" value="Chromosome 4"/>
</dbReference>
<dbReference type="RNAct" id="Q8C6D4">
    <property type="molecule type" value="protein"/>
</dbReference>
<dbReference type="Bgee" id="ENSMUSG00000028545">
    <property type="expression patterns" value="Expressed in manus and 207 other cell types or tissues"/>
</dbReference>
<dbReference type="ExpressionAtlas" id="Q8C6D4">
    <property type="expression patterns" value="baseline and differential"/>
</dbReference>
<dbReference type="GO" id="GO:0005794">
    <property type="term" value="C:Golgi apparatus"/>
    <property type="evidence" value="ECO:0000314"/>
    <property type="project" value="MGI"/>
</dbReference>
<dbReference type="GO" id="GO:0003677">
    <property type="term" value="F:DNA binding"/>
    <property type="evidence" value="ECO:0007669"/>
    <property type="project" value="UniProtKB-KW"/>
</dbReference>
<dbReference type="GO" id="GO:0045892">
    <property type="term" value="P:negative regulation of DNA-templated transcription"/>
    <property type="evidence" value="ECO:0007669"/>
    <property type="project" value="Ensembl"/>
</dbReference>
<dbReference type="FunFam" id="1.10.10.2590:FF:000003">
    <property type="entry name" value="BEN domain-containing protein 5 isoform X1"/>
    <property type="match status" value="1"/>
</dbReference>
<dbReference type="Gene3D" id="1.10.10.2590">
    <property type="entry name" value="BEN domain"/>
    <property type="match status" value="1"/>
</dbReference>
<dbReference type="InterPro" id="IPR018379">
    <property type="entry name" value="BEN_domain"/>
</dbReference>
<dbReference type="InterPro" id="IPR040391">
    <property type="entry name" value="BEND5"/>
</dbReference>
<dbReference type="PANTHER" id="PTHR14628">
    <property type="entry name" value="BEN DOMAIN-CONTAINING PROTEIN 5"/>
    <property type="match status" value="1"/>
</dbReference>
<dbReference type="PANTHER" id="PTHR14628:SF1">
    <property type="entry name" value="BEN DOMAIN-CONTAINING PROTEIN 5"/>
    <property type="match status" value="1"/>
</dbReference>
<dbReference type="Pfam" id="PF10523">
    <property type="entry name" value="BEN"/>
    <property type="match status" value="1"/>
</dbReference>
<dbReference type="SMART" id="SM01025">
    <property type="entry name" value="BEN"/>
    <property type="match status" value="1"/>
</dbReference>
<dbReference type="PROSITE" id="PS51457">
    <property type="entry name" value="BEN"/>
    <property type="match status" value="1"/>
</dbReference>
<keyword id="KW-0007">Acetylation</keyword>
<keyword id="KW-0025">Alternative splicing</keyword>
<keyword id="KW-0175">Coiled coil</keyword>
<keyword id="KW-0238">DNA-binding</keyword>
<keyword id="KW-1017">Isopeptide bond</keyword>
<keyword id="KW-1185">Reference proteome</keyword>
<keyword id="KW-0678">Repressor</keyword>
<keyword id="KW-0804">Transcription</keyword>
<keyword id="KW-0805">Transcription regulation</keyword>
<keyword id="KW-0832">Ubl conjugation</keyword>
<organism>
    <name type="scientific">Mus musculus</name>
    <name type="common">Mouse</name>
    <dbReference type="NCBI Taxonomy" id="10090"/>
    <lineage>
        <taxon>Eukaryota</taxon>
        <taxon>Metazoa</taxon>
        <taxon>Chordata</taxon>
        <taxon>Craniata</taxon>
        <taxon>Vertebrata</taxon>
        <taxon>Euteleostomi</taxon>
        <taxon>Mammalia</taxon>
        <taxon>Eutheria</taxon>
        <taxon>Euarchontoglires</taxon>
        <taxon>Glires</taxon>
        <taxon>Rodentia</taxon>
        <taxon>Myomorpha</taxon>
        <taxon>Muroidea</taxon>
        <taxon>Muridae</taxon>
        <taxon>Murinae</taxon>
        <taxon>Mus</taxon>
        <taxon>Mus</taxon>
    </lineage>
</organism>